<organism>
    <name type="scientific">Xenopus tropicalis</name>
    <name type="common">Western clawed frog</name>
    <name type="synonym">Silurana tropicalis</name>
    <dbReference type="NCBI Taxonomy" id="8364"/>
    <lineage>
        <taxon>Eukaryota</taxon>
        <taxon>Metazoa</taxon>
        <taxon>Chordata</taxon>
        <taxon>Craniata</taxon>
        <taxon>Vertebrata</taxon>
        <taxon>Euteleostomi</taxon>
        <taxon>Amphibia</taxon>
        <taxon>Batrachia</taxon>
        <taxon>Anura</taxon>
        <taxon>Pipoidea</taxon>
        <taxon>Pipidae</taxon>
        <taxon>Xenopodinae</taxon>
        <taxon>Xenopus</taxon>
        <taxon>Silurana</taxon>
    </lineage>
</organism>
<accession>Q5XGF1</accession>
<accession>Q28E44</accession>
<protein>
    <recommendedName>
        <fullName>Centromere protein N</fullName>
        <shortName>CENP-N</shortName>
    </recommendedName>
</protein>
<keyword id="KW-0137">Centromere</keyword>
<keyword id="KW-0158">Chromosome</keyword>
<keyword id="KW-0539">Nucleus</keyword>
<keyword id="KW-1185">Reference proteome</keyword>
<reference key="1">
    <citation type="submission" date="2006-06" db="EMBL/GenBank/DDBJ databases">
        <authorList>
            <consortium name="Sanger Xenopus tropicalis EST/cDNA project"/>
        </authorList>
    </citation>
    <scope>NUCLEOTIDE SEQUENCE [LARGE SCALE MRNA]</scope>
    <source>
        <tissue>Egg</tissue>
    </source>
</reference>
<reference key="2">
    <citation type="submission" date="2004-10" db="EMBL/GenBank/DDBJ databases">
        <authorList>
            <consortium name="NIH - Xenopus Gene Collection (XGC) project"/>
        </authorList>
    </citation>
    <scope>NUCLEOTIDE SEQUENCE [LARGE SCALE MRNA]</scope>
    <source>
        <tissue>Embryo</tissue>
    </source>
</reference>
<proteinExistence type="evidence at transcript level"/>
<gene>
    <name type="primary">cenpn</name>
    <name type="ORF">TEgg003d08.1</name>
</gene>
<feature type="chain" id="PRO_0000249500" description="Centromere protein N">
    <location>
        <begin position="1"/>
        <end position="348"/>
    </location>
</feature>
<comment type="function">
    <text evidence="1">Probable component of a centromeric complex involved in assembly of kinetochore proteins, mitotic progression and chromosome segregation.</text>
</comment>
<comment type="subcellular location">
    <subcellularLocation>
        <location evidence="1">Nucleus</location>
    </subcellularLocation>
    <subcellularLocation>
        <location evidence="1">Chromosome</location>
        <location evidence="1">Centromere</location>
    </subcellularLocation>
    <text evidence="1">Localizes exclusively in the centromeres.</text>
</comment>
<comment type="similarity">
    <text evidence="2">Belongs to the CENP-N/CHL4 family.</text>
</comment>
<comment type="sequence caution" evidence="2">
    <conflict type="erroneous initiation">
        <sequence resource="EMBL-CDS" id="AAH84491"/>
    </conflict>
</comment>
<dbReference type="EMBL" id="CR848458">
    <property type="protein sequence ID" value="CAJ82205.1"/>
    <property type="molecule type" value="mRNA"/>
</dbReference>
<dbReference type="EMBL" id="BC084491">
    <property type="protein sequence ID" value="AAH84491.1"/>
    <property type="status" value="ALT_INIT"/>
    <property type="molecule type" value="mRNA"/>
</dbReference>
<dbReference type="RefSeq" id="NP_001011097.1">
    <property type="nucleotide sequence ID" value="NM_001011097.1"/>
</dbReference>
<dbReference type="RefSeq" id="XP_012816431.1">
    <property type="nucleotide sequence ID" value="XM_012960977.3"/>
</dbReference>
<dbReference type="SMR" id="Q5XGF1"/>
<dbReference type="FunCoup" id="Q5XGF1">
    <property type="interactions" value="1879"/>
</dbReference>
<dbReference type="STRING" id="8364.ENSXETP00000035572"/>
<dbReference type="PaxDb" id="8364-ENSXETP00000000357"/>
<dbReference type="DNASU" id="496510"/>
<dbReference type="GeneID" id="496510"/>
<dbReference type="KEGG" id="xtr:496510"/>
<dbReference type="AGR" id="Xenbase:XB-GENE-945688"/>
<dbReference type="CTD" id="55839"/>
<dbReference type="Xenbase" id="XB-GENE-945688">
    <property type="gene designation" value="cenpn"/>
</dbReference>
<dbReference type="eggNOG" id="ENOG502QSE8">
    <property type="taxonomic scope" value="Eukaryota"/>
</dbReference>
<dbReference type="HOGENOM" id="CLU_070600_0_0_1"/>
<dbReference type="InParanoid" id="Q5XGF1"/>
<dbReference type="OMA" id="WSVYQMK"/>
<dbReference type="OrthoDB" id="6585699at2759"/>
<dbReference type="Reactome" id="R-XTR-141444">
    <property type="pathway name" value="Amplification of signal from unattached kinetochores via a MAD2 inhibitory signal"/>
</dbReference>
<dbReference type="Reactome" id="R-XTR-2467813">
    <property type="pathway name" value="Separation of Sister Chromatids"/>
</dbReference>
<dbReference type="Reactome" id="R-XTR-2500257">
    <property type="pathway name" value="Resolution of Sister Chromatid Cohesion"/>
</dbReference>
<dbReference type="Reactome" id="R-XTR-5663220">
    <property type="pathway name" value="RHO GTPases Activate Formins"/>
</dbReference>
<dbReference type="Reactome" id="R-XTR-606279">
    <property type="pathway name" value="Deposition of new CENPA-containing nucleosomes at the centromere"/>
</dbReference>
<dbReference type="Reactome" id="R-XTR-68877">
    <property type="pathway name" value="Mitotic Prometaphase"/>
</dbReference>
<dbReference type="Reactome" id="R-XTR-9648025">
    <property type="pathway name" value="EML4 and NUDC in mitotic spindle formation"/>
</dbReference>
<dbReference type="Proteomes" id="UP000008143">
    <property type="component" value="Chromosome 4"/>
</dbReference>
<dbReference type="Bgee" id="ENSXETG00000000170">
    <property type="expression patterns" value="Expressed in egg cell and 10 other cell types or tissues"/>
</dbReference>
<dbReference type="GO" id="GO:0000775">
    <property type="term" value="C:chromosome, centromeric region"/>
    <property type="evidence" value="ECO:0007669"/>
    <property type="project" value="UniProtKB-SubCell"/>
</dbReference>
<dbReference type="GO" id="GO:0005634">
    <property type="term" value="C:nucleus"/>
    <property type="evidence" value="ECO:0007669"/>
    <property type="project" value="UniProtKB-SubCell"/>
</dbReference>
<dbReference type="GO" id="GO:0034080">
    <property type="term" value="P:CENP-A containing chromatin assembly"/>
    <property type="evidence" value="ECO:0007669"/>
    <property type="project" value="InterPro"/>
</dbReference>
<dbReference type="GO" id="GO:0007059">
    <property type="term" value="P:chromosome segregation"/>
    <property type="evidence" value="ECO:0007669"/>
    <property type="project" value="InterPro"/>
</dbReference>
<dbReference type="InterPro" id="IPR052011">
    <property type="entry name" value="CENP-NAC/CAD_complex"/>
</dbReference>
<dbReference type="InterPro" id="IPR007902">
    <property type="entry name" value="Chl4/mis15/CENP-N"/>
</dbReference>
<dbReference type="PANTHER" id="PTHR46790">
    <property type="entry name" value="CENTROMERE PROTEIN N"/>
    <property type="match status" value="1"/>
</dbReference>
<dbReference type="PANTHER" id="PTHR46790:SF1">
    <property type="entry name" value="CENTROMERE PROTEIN N"/>
    <property type="match status" value="1"/>
</dbReference>
<dbReference type="Pfam" id="PF05238">
    <property type="entry name" value="CENP-N"/>
    <property type="match status" value="1"/>
</dbReference>
<evidence type="ECO:0000250" key="1"/>
<evidence type="ECO:0000305" key="2"/>
<name>CENPN_XENTR</name>
<sequence>MDEWIAEFIKRIILKLPFSQTMTILKAWGFLTDSELQTLTLRYPKDITATEVVRLCEAKNATIDHAAALDFVFNHAFSNKKLWTVYQMSKTSESENDLFDASEFKLQFKKSIHAVSKNVTINFKEFGEALWIRIAWGTHNTRPNQYKATFAVYHSQTPHVFITGLGKACRPLLCQALVIASKYSQIQEMELKSRCLESLKDIVFKRFNQPFSSHHSRPHEKALTQKIVDPRVTYENMREKERVHHLTRETFGEGPLPKLELASYKLETMFRAESIMGGNLTAGNEPFRCVVKFSSPHLLEAIRSLAPAGIAEAPISTLLSCIPHKARNSFKITEKRGLHPASSQPTNF</sequence>